<accession>A0A095C325</accession>
<gene>
    <name evidence="8" type="primary">MDR1</name>
    <name type="ORF">CNBG_1138</name>
</gene>
<name>MDR1_CRYD2</name>
<sequence>MSASPSPIGAAAGLDHLQARRDEEVVDSEKDALAHDSHAVNSGIPHPTATAPTIGIPIVPISAGRESSAPEEKISRSSIAASSDILHNPPSEKSISSAVPKSHRYKKSKFNFLKSRKKKEEEEKKNKEKEKEASVLPPVSFFALFKFAAPLEIVAMVFGLLLAIAAGSCQPLMTLIFGRLTTSFTNYAVIVNQISQGGLTPETAAALQAAKDDLKTQSGHNALYLMAIGIGMFLATWLYMFIWNVTGELNSKRIRERYLAAVLRQEIAYFDDLGAGEVATRIQTDCHLVQEGTSEKVALVFQYAGTFVCGFVLAFVRSPRLAGALISILPVIMICGGIMMTAMAKFGTAALDHIAKAGSLAEEVIGSIRTVQAFGKEKILGNKFADHIEKSKVIGRKGSIFEGFGLSIMFFAIYAAYALAFYYGGILVSHGDANSGIVINVFMSILIGSFSMAMLAPELAAVTKARGAAAKLFATIDRVPAIDSANKEGLKPDSLHGEISFENVRFHYPSRPSVPILKGFTTTFEAGKTFALVGASGSGKSTVVSLIERFYDPVSGVVKLDGRDIRSLNLNWLRQQIGLVSQEPTLFGTTVRGNVEHGLIGSIYENASPEEKFELVKKACIDANAHGFIMKLPQGYDTMVGERGMLLSGGQKQRVAIARAIVSDPRILLLDEATSALDTQSEGIVQDALDKASRGRTTITIAHRLSTIRDADRIYVMGAGEVIEQGSHNELLNNENGPYAQLVNNQKLAQEAAAEALQEDDDIDDLDDTVLGGASSPMQEKNGQLYRAVTGRSLASIAMDDIQAKRAEDLAAEDKIPSSFALYARLLRMNSADKLIYIFAFIAAICAGMVYPSLAILFGKALSDFEIQDPNELRQALSRKALWYFITALAAAIVIFFQSAGFSRAGWDLNGVLRKKLFTATLRHDIEWFDEDRNSTGAVTSNLADQPQKVQGLFGPTLGTVVQSCATLIGGCIIGLCYGPLLSLIGIACIPILVSGGYIRLKVVVLKDQRMKKLHAASAHLASEAAGAVRTVASLTREEDVRRIYSEALKGPMKLNFRTSIKSQCLFAASQGLTFCIIALVFYIGALWIIDGKYSTASFYTVLNSIVFASIQAGNVFTFVPDASKANSSAASIFRTIDNEPAINAESTEGKMLDHEHVVGHVRIEGVHFRYPTRPGVRVLRNLTIDVPAGTYVALVGPSGCGKSTTIQMLERFYDPLAGRVTLDGIDIKELNLANYRSQISLVSQEPTLYAGTIRFNILLGANKPMEEVTQDEIDAACKDANIYDFIISLPDGFDTEVGGKGSQLSGGQKQRIAIARALIRNPKVLLLDEATSALDSQSEKVVQEALDKAAKGRTTIAIAHRLSSIQHSDQIYYFSEGKVAEHGTHQELLAKKGGYYDLVQMQNLSRQ</sequence>
<protein>
    <recommendedName>
        <fullName evidence="8">ABC multidrug transporter MDR1</fullName>
    </recommendedName>
</protein>
<organism>
    <name type="scientific">Cryptococcus deuterogattii (strain R265)</name>
    <name type="common">Cryptococcus gattii VGII (strain R265)</name>
    <dbReference type="NCBI Taxonomy" id="294750"/>
    <lineage>
        <taxon>Eukaryota</taxon>
        <taxon>Fungi</taxon>
        <taxon>Dikarya</taxon>
        <taxon>Basidiomycota</taxon>
        <taxon>Agaricomycotina</taxon>
        <taxon>Tremellomycetes</taxon>
        <taxon>Tremellales</taxon>
        <taxon>Cryptococcaceae</taxon>
        <taxon>Cryptococcus</taxon>
        <taxon>Cryptococcus gattii species complex</taxon>
    </lineage>
</organism>
<proteinExistence type="evidence at protein level"/>
<keyword id="KW-0067">ATP-binding</keyword>
<keyword id="KW-1003">Cell membrane</keyword>
<keyword id="KW-0325">Glycoprotein</keyword>
<keyword id="KW-0472">Membrane</keyword>
<keyword id="KW-0547">Nucleotide-binding</keyword>
<keyword id="KW-0677">Repeat</keyword>
<keyword id="KW-0812">Transmembrane</keyword>
<keyword id="KW-1133">Transmembrane helix</keyword>
<keyword id="KW-0813">Transport</keyword>
<dbReference type="EMBL" id="CP025761">
    <property type="protein sequence ID" value="KGB75300.1"/>
    <property type="molecule type" value="Genomic_DNA"/>
</dbReference>
<dbReference type="SMR" id="A0A095C325"/>
<dbReference type="STRING" id="294750.A0A095C325"/>
<dbReference type="GlyCosmos" id="A0A095C325">
    <property type="glycosylation" value="5 sites, No reported glycans"/>
</dbReference>
<dbReference type="VEuPathDB" id="FungiDB:CNBG_1138"/>
<dbReference type="HOGENOM" id="CLU_000604_17_0_1"/>
<dbReference type="OMA" id="GFGQEEQ"/>
<dbReference type="OrthoDB" id="5730at5206"/>
<dbReference type="Proteomes" id="UP000029445">
    <property type="component" value="Chromosome 3"/>
</dbReference>
<dbReference type="GO" id="GO:0005743">
    <property type="term" value="C:mitochondrial inner membrane"/>
    <property type="evidence" value="ECO:0007669"/>
    <property type="project" value="TreeGrafter"/>
</dbReference>
<dbReference type="GO" id="GO:0005886">
    <property type="term" value="C:plasma membrane"/>
    <property type="evidence" value="ECO:0007669"/>
    <property type="project" value="UniProtKB-SubCell"/>
</dbReference>
<dbReference type="GO" id="GO:0015421">
    <property type="term" value="F:ABC-type oligopeptide transporter activity"/>
    <property type="evidence" value="ECO:0007669"/>
    <property type="project" value="TreeGrafter"/>
</dbReference>
<dbReference type="GO" id="GO:0005524">
    <property type="term" value="F:ATP binding"/>
    <property type="evidence" value="ECO:0007669"/>
    <property type="project" value="UniProtKB-KW"/>
</dbReference>
<dbReference type="GO" id="GO:0016887">
    <property type="term" value="F:ATP hydrolysis activity"/>
    <property type="evidence" value="ECO:0007669"/>
    <property type="project" value="InterPro"/>
</dbReference>
<dbReference type="GO" id="GO:0090374">
    <property type="term" value="P:oligopeptide export from mitochondrion"/>
    <property type="evidence" value="ECO:0007669"/>
    <property type="project" value="TreeGrafter"/>
</dbReference>
<dbReference type="CDD" id="cd18577">
    <property type="entry name" value="ABC_6TM_Pgp_ABCB1_D1_like"/>
    <property type="match status" value="1"/>
</dbReference>
<dbReference type="CDD" id="cd18578">
    <property type="entry name" value="ABC_6TM_Pgp_ABCB1_D2_like"/>
    <property type="match status" value="1"/>
</dbReference>
<dbReference type="CDD" id="cd03249">
    <property type="entry name" value="ABC_MTABC3_MDL1_MDL2"/>
    <property type="match status" value="2"/>
</dbReference>
<dbReference type="FunFam" id="1.20.1560.10:FF:000102">
    <property type="entry name" value="ABC multidrug transporter Mdr1"/>
    <property type="match status" value="1"/>
</dbReference>
<dbReference type="FunFam" id="3.40.50.300:FF:000066">
    <property type="entry name" value="ABC transporter B family member 1"/>
    <property type="match status" value="1"/>
</dbReference>
<dbReference type="FunFam" id="3.40.50.300:FF:001370">
    <property type="entry name" value="p-GlycoProtein related"/>
    <property type="match status" value="1"/>
</dbReference>
<dbReference type="Gene3D" id="1.20.1560.10">
    <property type="entry name" value="ABC transporter type 1, transmembrane domain"/>
    <property type="match status" value="1"/>
</dbReference>
<dbReference type="Gene3D" id="3.40.50.300">
    <property type="entry name" value="P-loop containing nucleotide triphosphate hydrolases"/>
    <property type="match status" value="2"/>
</dbReference>
<dbReference type="InterPro" id="IPR003593">
    <property type="entry name" value="AAA+_ATPase"/>
</dbReference>
<dbReference type="InterPro" id="IPR011527">
    <property type="entry name" value="ABC1_TM_dom"/>
</dbReference>
<dbReference type="InterPro" id="IPR036640">
    <property type="entry name" value="ABC1_TM_sf"/>
</dbReference>
<dbReference type="InterPro" id="IPR003439">
    <property type="entry name" value="ABC_transporter-like_ATP-bd"/>
</dbReference>
<dbReference type="InterPro" id="IPR017871">
    <property type="entry name" value="ABC_transporter-like_CS"/>
</dbReference>
<dbReference type="InterPro" id="IPR027417">
    <property type="entry name" value="P-loop_NTPase"/>
</dbReference>
<dbReference type="InterPro" id="IPR039421">
    <property type="entry name" value="Type_1_exporter"/>
</dbReference>
<dbReference type="PANTHER" id="PTHR43394">
    <property type="entry name" value="ATP-DEPENDENT PERMEASE MDL1, MITOCHONDRIAL"/>
    <property type="match status" value="1"/>
</dbReference>
<dbReference type="PANTHER" id="PTHR43394:SF27">
    <property type="entry name" value="ATP-DEPENDENT TRANSLOCASE ABCB1-LIKE"/>
    <property type="match status" value="1"/>
</dbReference>
<dbReference type="Pfam" id="PF00664">
    <property type="entry name" value="ABC_membrane"/>
    <property type="match status" value="2"/>
</dbReference>
<dbReference type="Pfam" id="PF00005">
    <property type="entry name" value="ABC_tran"/>
    <property type="match status" value="2"/>
</dbReference>
<dbReference type="SMART" id="SM00382">
    <property type="entry name" value="AAA"/>
    <property type="match status" value="2"/>
</dbReference>
<dbReference type="SUPFAM" id="SSF90123">
    <property type="entry name" value="ABC transporter transmembrane region"/>
    <property type="match status" value="2"/>
</dbReference>
<dbReference type="SUPFAM" id="SSF52540">
    <property type="entry name" value="P-loop containing nucleoside triphosphate hydrolases"/>
    <property type="match status" value="2"/>
</dbReference>
<dbReference type="PROSITE" id="PS50929">
    <property type="entry name" value="ABC_TM1F"/>
    <property type="match status" value="2"/>
</dbReference>
<dbReference type="PROSITE" id="PS00211">
    <property type="entry name" value="ABC_TRANSPORTER_1"/>
    <property type="match status" value="2"/>
</dbReference>
<dbReference type="PROSITE" id="PS50893">
    <property type="entry name" value="ABC_TRANSPORTER_2"/>
    <property type="match status" value="2"/>
</dbReference>
<comment type="function">
    <text evidence="6 7">Pleiotropic ABC efflux transporter that confers resistance to structurally and functionally unrelated compounds including azoles such as fluconazole (FLC), itraconazole (ITC), posaconazole (POS), nocodazole and voriconazole (VRC).</text>
</comment>
<comment type="catalytic activity">
    <reaction evidence="6">
        <text>itraconazole(in) + ATP + H2O = itraconazole(out) + ADP + phosphate + H(+)</text>
        <dbReference type="Rhea" id="RHEA:33503"/>
        <dbReference type="ChEBI" id="CHEBI:6076"/>
        <dbReference type="ChEBI" id="CHEBI:15377"/>
        <dbReference type="ChEBI" id="CHEBI:15378"/>
        <dbReference type="ChEBI" id="CHEBI:30616"/>
        <dbReference type="ChEBI" id="CHEBI:43474"/>
        <dbReference type="ChEBI" id="CHEBI:456216"/>
    </reaction>
    <physiologicalReaction direction="left-to-right" evidence="6">
        <dbReference type="Rhea" id="RHEA:33504"/>
    </physiologicalReaction>
</comment>
<comment type="catalytic activity">
    <reaction evidence="6">
        <text>voriconazole(in) + ATP + H2O = voriconazole(out) + ADP + phosphate + H(+)</text>
        <dbReference type="Rhea" id="RHEA:61912"/>
        <dbReference type="ChEBI" id="CHEBI:10023"/>
        <dbReference type="ChEBI" id="CHEBI:15377"/>
        <dbReference type="ChEBI" id="CHEBI:15378"/>
        <dbReference type="ChEBI" id="CHEBI:30616"/>
        <dbReference type="ChEBI" id="CHEBI:43474"/>
        <dbReference type="ChEBI" id="CHEBI:456216"/>
    </reaction>
    <physiologicalReaction direction="left-to-right" evidence="6">
        <dbReference type="Rhea" id="RHEA:61913"/>
    </physiologicalReaction>
</comment>
<comment type="catalytic activity">
    <reaction evidence="6">
        <text>fluconazole(in) + ATP + H2O = fluconazole(out) + ADP + phosphate + H(+)</text>
        <dbReference type="Rhea" id="RHEA:61916"/>
        <dbReference type="ChEBI" id="CHEBI:15377"/>
        <dbReference type="ChEBI" id="CHEBI:15378"/>
        <dbReference type="ChEBI" id="CHEBI:30616"/>
        <dbReference type="ChEBI" id="CHEBI:43474"/>
        <dbReference type="ChEBI" id="CHEBI:46081"/>
        <dbReference type="ChEBI" id="CHEBI:456216"/>
    </reaction>
    <physiologicalReaction direction="left-to-right" evidence="6">
        <dbReference type="Rhea" id="RHEA:61917"/>
    </physiologicalReaction>
</comment>
<comment type="biophysicochemical properties">
    <kinetics>
        <KM evidence="6">0.31 uM for fluconazole transport</KM>
        <Vmax evidence="6">23.4 pmol/min/mg enzyme for fluconazole transport</Vmax>
    </kinetics>
</comment>
<comment type="subcellular location">
    <subcellularLocation>
        <location evidence="6">Cell membrane</location>
        <topology evidence="1">Multi-pass membrane protein</topology>
    </subcellularLocation>
</comment>
<comment type="induction">
    <text evidence="6 7">Expression is not induced in the presence of fluconazole (FLC).</text>
</comment>
<comment type="disruption phenotype">
    <text evidence="7">Caused higher susceptibility to nocodazole and rhodamine 6G (R-6G) but higher resistance to cycloheximid (CHX) (PubMed:29378705). Causes further increase in susceptibility toward fluconazole and itraconazole, when AFR1 and AFR2 are also deleted (PubMed:29378705).</text>
</comment>
<comment type="similarity">
    <text evidence="9">Belongs to the ABC transporter superfamily. ABCB family. Multidrug resistance exporter (TC 3.A.1.201) subfamily.</text>
</comment>
<evidence type="ECO:0000255" key="1"/>
<evidence type="ECO:0000255" key="2">
    <source>
        <dbReference type="PROSITE-ProRule" id="PRU00434"/>
    </source>
</evidence>
<evidence type="ECO:0000255" key="3">
    <source>
        <dbReference type="PROSITE-ProRule" id="PRU00441"/>
    </source>
</evidence>
<evidence type="ECO:0000255" key="4">
    <source>
        <dbReference type="PROSITE-ProRule" id="PRU00498"/>
    </source>
</evidence>
<evidence type="ECO:0000256" key="5">
    <source>
        <dbReference type="SAM" id="MobiDB-lite"/>
    </source>
</evidence>
<evidence type="ECO:0000269" key="6">
    <source>
    </source>
</evidence>
<evidence type="ECO:0000269" key="7">
    <source>
    </source>
</evidence>
<evidence type="ECO:0000303" key="8">
    <source>
    </source>
</evidence>
<evidence type="ECO:0000305" key="9"/>
<reference key="1">
    <citation type="journal article" date="2011" name="MBio">
        <title>Genome variation in Cryptococcus gattii, an emerging pathogen of immunocompetent hosts.</title>
        <authorList>
            <person name="D'Souza C.A."/>
            <person name="Kronstad J.W."/>
            <person name="Taylor G."/>
            <person name="Warren R."/>
            <person name="Yuen M."/>
            <person name="Hu G."/>
            <person name="Jung W.H."/>
            <person name="Sham A."/>
            <person name="Kidd S.E."/>
            <person name="Tangen K."/>
            <person name="Lee N."/>
            <person name="Zeilmaker T."/>
            <person name="Sawkins J."/>
            <person name="McVicker G."/>
            <person name="Shah S."/>
            <person name="Gnerre S."/>
            <person name="Griggs A."/>
            <person name="Zeng Q."/>
            <person name="Bartlett K."/>
            <person name="Li W."/>
            <person name="Wang X."/>
            <person name="Heitman J."/>
            <person name="Stajich J.E."/>
            <person name="Fraser J.A."/>
            <person name="Meyer W."/>
            <person name="Carter D."/>
            <person name="Schein J."/>
            <person name="Krzywinski M."/>
            <person name="Kwon-Chung K.J."/>
            <person name="Varma A."/>
            <person name="Wang J."/>
            <person name="Brunham R."/>
            <person name="Fyfe M."/>
            <person name="Ouellette B.F.F."/>
            <person name="Siddiqui A."/>
            <person name="Marra M."/>
            <person name="Jones S."/>
            <person name="Holt R."/>
            <person name="Birren B.W."/>
            <person name="Galagan J.E."/>
            <person name="Cuomo C.A."/>
        </authorList>
    </citation>
    <scope>NUCLEOTIDE SEQUENCE [LARGE SCALE GENOMIC DNA]</scope>
    <source>
        <strain>R265</strain>
    </source>
</reference>
<reference key="2">
    <citation type="journal article" date="2015" name="J. Antimicrob. Chemother.">
        <title>Identification and properties of plasma membrane azole efflux pumps from the pathogenic fungi Cryptococcus gattii and Cryptococcus neoformans.</title>
        <authorList>
            <person name="Basso L.R. Jr."/>
            <person name="Gast C.E."/>
            <person name="Bruzual I."/>
            <person name="Wong B."/>
        </authorList>
    </citation>
    <scope>FUNCTION</scope>
    <scope>INDUCTION</scope>
    <scope>CATALYTIC ACTIVITY</scope>
    <scope>SUBSTRATE SPECIFICITY</scope>
    <scope>BIOPHYSICOCHEMICAL PROPERTIES</scope>
    <scope>SUBCELLULAR LOCATION</scope>
</reference>
<reference key="3">
    <citation type="journal article" date="2018" name="Antimicrob. Agents Chemother.">
        <title>Roles of three Cryptococcus neoformans and Cryptococcus gattii efflux pump-coding genes in response to drug treatment.</title>
        <authorList>
            <person name="Chang M."/>
            <person name="Sionov E."/>
            <person name="Khanal Lamichhane A."/>
            <person name="Kwon-Chung K.J."/>
            <person name="Chang Y.C."/>
        </authorList>
    </citation>
    <scope>FUNCTION</scope>
    <scope>DISRUPTION PHENOTYPE</scope>
    <scope>INDUCTION</scope>
</reference>
<feature type="chain" id="PRO_0000452668" description="ABC multidrug transporter MDR1">
    <location>
        <begin position="1"/>
        <end position="1408"/>
    </location>
</feature>
<feature type="transmembrane region" description="Helical" evidence="1 3">
    <location>
        <begin position="147"/>
        <end position="167"/>
    </location>
</feature>
<feature type="transmembrane region" description="Helical" evidence="1 3">
    <location>
        <begin position="223"/>
        <end position="243"/>
    </location>
</feature>
<feature type="transmembrane region" description="Helical" evidence="1 3">
    <location>
        <begin position="296"/>
        <end position="316"/>
    </location>
</feature>
<feature type="transmembrane region" description="Helical" evidence="1 3">
    <location>
        <begin position="321"/>
        <end position="341"/>
    </location>
</feature>
<feature type="transmembrane region" description="Helical" evidence="1 3">
    <location>
        <begin position="408"/>
        <end position="428"/>
    </location>
</feature>
<feature type="transmembrane region" description="Helical" evidence="1 3">
    <location>
        <begin position="436"/>
        <end position="456"/>
    </location>
</feature>
<feature type="transmembrane region" description="Helical" evidence="1 3">
    <location>
        <begin position="838"/>
        <end position="858"/>
    </location>
</feature>
<feature type="transmembrane region" description="Helical" evidence="1 3">
    <location>
        <begin position="882"/>
        <end position="902"/>
    </location>
</feature>
<feature type="transmembrane region" description="Helical" evidence="1 3">
    <location>
        <begin position="952"/>
        <end position="972"/>
    </location>
</feature>
<feature type="transmembrane region" description="Helical" evidence="1 3">
    <location>
        <begin position="973"/>
        <end position="993"/>
    </location>
</feature>
<feature type="transmembrane region" description="Helical" evidence="1 3">
    <location>
        <begin position="1072"/>
        <end position="1092"/>
    </location>
</feature>
<feature type="transmembrane region" description="Helical" evidence="1 3">
    <location>
        <begin position="1099"/>
        <end position="1119"/>
    </location>
</feature>
<feature type="domain" description="ABC transmembrane type-1 1" evidence="3">
    <location>
        <begin position="157"/>
        <end position="464"/>
    </location>
</feature>
<feature type="domain" description="ABC transporter 1" evidence="2">
    <location>
        <begin position="499"/>
        <end position="744"/>
    </location>
</feature>
<feature type="domain" description="ABC transmembrane type-1 2" evidence="3">
    <location>
        <begin position="838"/>
        <end position="1125"/>
    </location>
</feature>
<feature type="domain" description="ABC transporter 2" evidence="2">
    <location>
        <begin position="1162"/>
        <end position="1402"/>
    </location>
</feature>
<feature type="region of interest" description="Disordered" evidence="5">
    <location>
        <begin position="1"/>
        <end position="103"/>
    </location>
</feature>
<feature type="compositionally biased region" description="Low complexity" evidence="5">
    <location>
        <begin position="1"/>
        <end position="13"/>
    </location>
</feature>
<feature type="compositionally biased region" description="Basic and acidic residues" evidence="5">
    <location>
        <begin position="17"/>
        <end position="38"/>
    </location>
</feature>
<feature type="binding site" evidence="2">
    <location>
        <begin position="534"/>
        <end position="541"/>
    </location>
    <ligand>
        <name>ATP</name>
        <dbReference type="ChEBI" id="CHEBI:30616"/>
    </ligand>
</feature>
<feature type="binding site" evidence="2">
    <location>
        <begin position="1197"/>
        <end position="1204"/>
    </location>
    <ligand>
        <name>ATP</name>
        <dbReference type="ChEBI" id="CHEBI:30616"/>
    </ligand>
</feature>
<feature type="glycosylation site" description="N-linked (GlcNAc...) asparagine" evidence="4">
    <location>
        <position position="244"/>
    </location>
</feature>
<feature type="glycosylation site" description="N-linked (GlcNAc...) asparagine" evidence="4">
    <location>
        <position position="934"/>
    </location>
</feature>
<feature type="glycosylation site" description="N-linked (GlcNAc...) asparagine" evidence="4">
    <location>
        <position position="1127"/>
    </location>
</feature>
<feature type="glycosylation site" description="N-linked (GlcNAc...) asparagine" evidence="4">
    <location>
        <position position="1182"/>
    </location>
</feature>
<feature type="glycosylation site" description="N-linked (GlcNAc...) asparagine" evidence="4">
    <location>
        <position position="1404"/>
    </location>
</feature>